<accession>B2FNN0</accession>
<reference key="1">
    <citation type="journal article" date="2008" name="Genome Biol.">
        <title>The complete genome, comparative and functional analysis of Stenotrophomonas maltophilia reveals an organism heavily shielded by drug resistance determinants.</title>
        <authorList>
            <person name="Crossman L.C."/>
            <person name="Gould V.C."/>
            <person name="Dow J.M."/>
            <person name="Vernikos G.S."/>
            <person name="Okazaki A."/>
            <person name="Sebaihia M."/>
            <person name="Saunders D."/>
            <person name="Arrowsmith C."/>
            <person name="Carver T."/>
            <person name="Peters N."/>
            <person name="Adlem E."/>
            <person name="Kerhornou A."/>
            <person name="Lord A."/>
            <person name="Murphy L."/>
            <person name="Seeger K."/>
            <person name="Squares R."/>
            <person name="Rutter S."/>
            <person name="Quail M.A."/>
            <person name="Rajandream M.A."/>
            <person name="Harris D."/>
            <person name="Churcher C."/>
            <person name="Bentley S.D."/>
            <person name="Parkhill J."/>
            <person name="Thomson N.R."/>
            <person name="Avison M.B."/>
        </authorList>
    </citation>
    <scope>NUCLEOTIDE SEQUENCE [LARGE SCALE GENOMIC DNA]</scope>
    <source>
        <strain>K279a</strain>
    </source>
</reference>
<name>RSMH_STRMK</name>
<proteinExistence type="inferred from homology"/>
<feature type="chain" id="PRO_0000387142" description="Ribosomal RNA small subunit methyltransferase H">
    <location>
        <begin position="1"/>
        <end position="322"/>
    </location>
</feature>
<feature type="binding site" evidence="1">
    <location>
        <begin position="47"/>
        <end position="49"/>
    </location>
    <ligand>
        <name>S-adenosyl-L-methionine</name>
        <dbReference type="ChEBI" id="CHEBI:59789"/>
    </ligand>
</feature>
<feature type="binding site" evidence="1">
    <location>
        <position position="67"/>
    </location>
    <ligand>
        <name>S-adenosyl-L-methionine</name>
        <dbReference type="ChEBI" id="CHEBI:59789"/>
    </ligand>
</feature>
<feature type="binding site" evidence="1">
    <location>
        <position position="93"/>
    </location>
    <ligand>
        <name>S-adenosyl-L-methionine</name>
        <dbReference type="ChEBI" id="CHEBI:59789"/>
    </ligand>
</feature>
<feature type="binding site" evidence="1">
    <location>
        <position position="112"/>
    </location>
    <ligand>
        <name>S-adenosyl-L-methionine</name>
        <dbReference type="ChEBI" id="CHEBI:59789"/>
    </ligand>
</feature>
<feature type="binding site" evidence="1">
    <location>
        <position position="119"/>
    </location>
    <ligand>
        <name>S-adenosyl-L-methionine</name>
        <dbReference type="ChEBI" id="CHEBI:59789"/>
    </ligand>
</feature>
<dbReference type="EC" id="2.1.1.199" evidence="1"/>
<dbReference type="EMBL" id="AM743169">
    <property type="protein sequence ID" value="CAQ44325.1"/>
    <property type="molecule type" value="Genomic_DNA"/>
</dbReference>
<dbReference type="RefSeq" id="WP_012479154.1">
    <property type="nucleotide sequence ID" value="NC_010943.1"/>
</dbReference>
<dbReference type="SMR" id="B2FNN0"/>
<dbReference type="EnsemblBacteria" id="CAQ44325">
    <property type="protein sequence ID" value="CAQ44325"/>
    <property type="gene ID" value="Smlt0748"/>
</dbReference>
<dbReference type="GeneID" id="97259785"/>
<dbReference type="KEGG" id="sml:Smlt0748"/>
<dbReference type="eggNOG" id="COG0275">
    <property type="taxonomic scope" value="Bacteria"/>
</dbReference>
<dbReference type="HOGENOM" id="CLU_038422_2_0_6"/>
<dbReference type="Proteomes" id="UP000008840">
    <property type="component" value="Chromosome"/>
</dbReference>
<dbReference type="GO" id="GO:0005737">
    <property type="term" value="C:cytoplasm"/>
    <property type="evidence" value="ECO:0007669"/>
    <property type="project" value="UniProtKB-SubCell"/>
</dbReference>
<dbReference type="GO" id="GO:0071424">
    <property type="term" value="F:rRNA (cytosine-N4-)-methyltransferase activity"/>
    <property type="evidence" value="ECO:0007669"/>
    <property type="project" value="UniProtKB-UniRule"/>
</dbReference>
<dbReference type="GO" id="GO:0070475">
    <property type="term" value="P:rRNA base methylation"/>
    <property type="evidence" value="ECO:0007669"/>
    <property type="project" value="UniProtKB-UniRule"/>
</dbReference>
<dbReference type="FunFam" id="1.10.150.170:FF:000001">
    <property type="entry name" value="Ribosomal RNA small subunit methyltransferase H"/>
    <property type="match status" value="1"/>
</dbReference>
<dbReference type="Gene3D" id="1.10.150.170">
    <property type="entry name" value="Putative methyltransferase TM0872, insert domain"/>
    <property type="match status" value="1"/>
</dbReference>
<dbReference type="Gene3D" id="3.40.50.150">
    <property type="entry name" value="Vaccinia Virus protein VP39"/>
    <property type="match status" value="1"/>
</dbReference>
<dbReference type="HAMAP" id="MF_01007">
    <property type="entry name" value="16SrRNA_methyltr_H"/>
    <property type="match status" value="1"/>
</dbReference>
<dbReference type="InterPro" id="IPR002903">
    <property type="entry name" value="RsmH"/>
</dbReference>
<dbReference type="InterPro" id="IPR023397">
    <property type="entry name" value="SAM-dep_MeTrfase_MraW_recog"/>
</dbReference>
<dbReference type="InterPro" id="IPR029063">
    <property type="entry name" value="SAM-dependent_MTases_sf"/>
</dbReference>
<dbReference type="NCBIfam" id="TIGR00006">
    <property type="entry name" value="16S rRNA (cytosine(1402)-N(4))-methyltransferase RsmH"/>
    <property type="match status" value="1"/>
</dbReference>
<dbReference type="PANTHER" id="PTHR11265:SF0">
    <property type="entry name" value="12S RRNA N4-METHYLCYTIDINE METHYLTRANSFERASE"/>
    <property type="match status" value="1"/>
</dbReference>
<dbReference type="PANTHER" id="PTHR11265">
    <property type="entry name" value="S-ADENOSYL-METHYLTRANSFERASE MRAW"/>
    <property type="match status" value="1"/>
</dbReference>
<dbReference type="Pfam" id="PF01795">
    <property type="entry name" value="Methyltransf_5"/>
    <property type="match status" value="1"/>
</dbReference>
<dbReference type="PIRSF" id="PIRSF004486">
    <property type="entry name" value="MraW"/>
    <property type="match status" value="1"/>
</dbReference>
<dbReference type="SUPFAM" id="SSF81799">
    <property type="entry name" value="Putative methyltransferase TM0872, insert domain"/>
    <property type="match status" value="1"/>
</dbReference>
<dbReference type="SUPFAM" id="SSF53335">
    <property type="entry name" value="S-adenosyl-L-methionine-dependent methyltransferases"/>
    <property type="match status" value="1"/>
</dbReference>
<gene>
    <name evidence="1" type="primary">rsmH</name>
    <name type="synonym">mraW</name>
    <name type="ordered locus">Smlt0748</name>
</gene>
<keyword id="KW-0963">Cytoplasm</keyword>
<keyword id="KW-0489">Methyltransferase</keyword>
<keyword id="KW-1185">Reference proteome</keyword>
<keyword id="KW-0698">rRNA processing</keyword>
<keyword id="KW-0949">S-adenosyl-L-methionine</keyword>
<keyword id="KW-0808">Transferase</keyword>
<comment type="function">
    <text evidence="1">Specifically methylates the N4 position of cytidine in position 1402 (C1402) of 16S rRNA.</text>
</comment>
<comment type="catalytic activity">
    <reaction evidence="1">
        <text>cytidine(1402) in 16S rRNA + S-adenosyl-L-methionine = N(4)-methylcytidine(1402) in 16S rRNA + S-adenosyl-L-homocysteine + H(+)</text>
        <dbReference type="Rhea" id="RHEA:42928"/>
        <dbReference type="Rhea" id="RHEA-COMP:10286"/>
        <dbReference type="Rhea" id="RHEA-COMP:10287"/>
        <dbReference type="ChEBI" id="CHEBI:15378"/>
        <dbReference type="ChEBI" id="CHEBI:57856"/>
        <dbReference type="ChEBI" id="CHEBI:59789"/>
        <dbReference type="ChEBI" id="CHEBI:74506"/>
        <dbReference type="ChEBI" id="CHEBI:82748"/>
        <dbReference type="EC" id="2.1.1.199"/>
    </reaction>
</comment>
<comment type="subcellular location">
    <subcellularLocation>
        <location evidence="1">Cytoplasm</location>
    </subcellularLocation>
</comment>
<comment type="similarity">
    <text evidence="1">Belongs to the methyltransferase superfamily. RsmH family.</text>
</comment>
<evidence type="ECO:0000255" key="1">
    <source>
        <dbReference type="HAMAP-Rule" id="MF_01007"/>
    </source>
</evidence>
<organism>
    <name type="scientific">Stenotrophomonas maltophilia (strain K279a)</name>
    <dbReference type="NCBI Taxonomy" id="522373"/>
    <lineage>
        <taxon>Bacteria</taxon>
        <taxon>Pseudomonadati</taxon>
        <taxon>Pseudomonadota</taxon>
        <taxon>Gammaproteobacteria</taxon>
        <taxon>Lysobacterales</taxon>
        <taxon>Lysobacteraceae</taxon>
        <taxon>Stenotrophomonas</taxon>
        <taxon>Stenotrophomonas maltophilia group</taxon>
    </lineage>
</organism>
<sequence length="322" mass="35444">MRPEAQTGHLPVSQSPAVHLPVLYTQVLEGLRVIENGRYLDGTFGRGGHARGVLTQLGPEGRLLVMDKDPEAIAVAERDFAPDPRVSIFRGSFAQLLQWDATAEGLDGVLFDLGVSSPQLDVAERGFSFGKDGPLDMRMDPDSGESAAQWINRVEEREIADVLWTYGEERQSRRIARAIVARREKQPFSRTAELAELIASVMPRGKDKIHPATRSFQAIRIHINRELADLEAGLDAAVERLKPGGRLAVISFHSLEDRIVKQYMNRLAKAPPANRRLPEAVAFVPTLDLIGGAIKATDEELAANPRARSAVLRVAQKREADA</sequence>
<protein>
    <recommendedName>
        <fullName evidence="1">Ribosomal RNA small subunit methyltransferase H</fullName>
        <ecNumber evidence="1">2.1.1.199</ecNumber>
    </recommendedName>
    <alternativeName>
        <fullName evidence="1">16S rRNA m(4)C1402 methyltransferase</fullName>
    </alternativeName>
    <alternativeName>
        <fullName evidence="1">rRNA (cytosine-N(4)-)-methyltransferase RsmH</fullName>
    </alternativeName>
</protein>